<organism evidence="9">
    <name type="scientific">Caenorhabditis elegans</name>
    <dbReference type="NCBI Taxonomy" id="6239"/>
    <lineage>
        <taxon>Eukaryota</taxon>
        <taxon>Metazoa</taxon>
        <taxon>Ecdysozoa</taxon>
        <taxon>Nematoda</taxon>
        <taxon>Chromadorea</taxon>
        <taxon>Rhabditida</taxon>
        <taxon>Rhabditina</taxon>
        <taxon>Rhabditomorpha</taxon>
        <taxon>Rhabditoidea</taxon>
        <taxon>Rhabditidae</taxon>
        <taxon>Peloderinae</taxon>
        <taxon>Caenorhabditis</taxon>
    </lineage>
</organism>
<comment type="function">
    <text evidence="1">Guanylate cyclase involved in the production of the second messenger cGMP (By similarity).</text>
</comment>
<comment type="catalytic activity">
    <reaction evidence="1">
        <text>GTP = 3',5'-cyclic GMP + diphosphate</text>
        <dbReference type="Rhea" id="RHEA:13665"/>
        <dbReference type="ChEBI" id="CHEBI:33019"/>
        <dbReference type="ChEBI" id="CHEBI:37565"/>
        <dbReference type="ChEBI" id="CHEBI:57746"/>
        <dbReference type="EC" id="4.6.1.2"/>
    </reaction>
</comment>
<comment type="subcellular location">
    <subcellularLocation>
        <location evidence="8">Cell membrane</location>
        <topology evidence="8">Single-pass type I membrane protein</topology>
    </subcellularLocation>
</comment>
<comment type="tissue specificity">
    <text evidence="7">Expressed asymmetrically in ASE right (ASER) sensory neuron and bilaterally in ASI sensory neurons. Expressed in PVT interneuron.</text>
</comment>
<comment type="domain">
    <text evidence="4">The protein kinase domain is predicted to be catalytically inactive.</text>
</comment>
<comment type="similarity">
    <text evidence="3">Belongs to the adenylyl cyclase class-4/guanylyl cyclase family.</text>
</comment>
<accession>Q10028</accession>
<protein>
    <recommendedName>
        <fullName evidence="8">Receptor-type guanylate cyclase gcy-3</fullName>
        <ecNumber evidence="1">4.6.1.2</ecNumber>
    </recommendedName>
</protein>
<sequence length="1140" mass="128075">MKNVFQLLIPLFFHLFSLVSLQNIPVSTGTTRPKLKVGIAAAQKTQSASIGWNVCGGAVPLAIERLKQAGYVTNFDFEYYVEYTECDLASTVRTGINFLKNLEVDVIIGPPCSEAIRTMATLATLYKKPVLGWGFVSQADLSDMTRFPYLITVLPTSQTLGYAASKLLELYKWDKVALLYYKSEVNHCGGVMNDVETTFNDPSTYSIQIVLKAEIDASDNVTTNAVISSVKTRARIILWCAQLGSEKRDYMIKISQLGLDTDEYVHVLISMRSIGFGVQTFVGKTTFKLSGLTPVWESFSNVTDGLENVAKRGATNVLVIDLNSEVSDKAYLDYMQRNILNVVKLPPLNCSTVDCVSSTATGMGAYARHLFDVVYLYGIALTRVNSTDSAVYDDMSKLIPQFVTSFNGMTGLVAINQNLSRMPLYQLYGLDEQYEQTSLMNLSFADGTTVATISLAYSNESSAVWHFWGGIRPLATPICGFLGNSCPLPFWEQYGILIFVGAGVFLIMITTNLICFLFMIKNRREEQARINSEWQIPFVKLRELERKSKGTSKRSLQSAPSTITGESKVSTGSEFCENYEVKMFEKDMVLTMKFQYMNLNKADMDKFVKLRKLDHENLNKFIGLSIDSSQFISVTKLCSRGSLLDILYKGNFSMDFFFMYCIIKDVAEGMSYLHKSFLRLHGNLRSATCLVNDSWQVKLAEFGFDQLLEEITPTKRRLLWAAPEVLRGSLTVSQMDPSADVFSFAIIASEILTRKEAWDLKERKEGYDEIIYRVKKGGSFPIRPDIITDVPDVNPTLIALVKDCWAEAPEDRPTAENICEQLRDLMPKTKSNLMDHVFNMLEEYTSTLEVEVEERTKELTLEKKKADLLLSRMLPKQVAERLKAGQTVEPEGFDSVTVFFSDVVKFTILASKCTPFQVVNLLNDLYSNFDTIIEEHGVYKVESIGDGYLCVSGLPTRNGFNHIKQIVDMSLKFMDYCKNFKIPHLPRERVELRIGVNSGPCVAGVVGLSMPRYCLFGDTVNTASRMESNGKPSLIHLTSDAHLLLMKHFPHQYETNSRGEVIIKGKGVMETFWVLGRSGDIEPSISNRSTPPVTQERFTVRAPDTPEARSVSSHGSRPSSNHNNNNDPLYRQYKMDTLKI</sequence>
<feature type="signal peptide" evidence="2">
    <location>
        <begin position="1"/>
        <end position="21"/>
    </location>
</feature>
<feature type="chain" id="PRO_0000433271" description="Receptor-type guanylate cyclase gcy-3" evidence="2">
    <location>
        <begin position="22"/>
        <end position="1140"/>
    </location>
</feature>
<feature type="topological domain" description="Extracellular" evidence="2">
    <location>
        <begin position="22"/>
        <end position="495"/>
    </location>
</feature>
<feature type="transmembrane region" description="Helical" evidence="2">
    <location>
        <begin position="496"/>
        <end position="516"/>
    </location>
</feature>
<feature type="topological domain" description="Cytoplasmic" evidence="2">
    <location>
        <begin position="517"/>
        <end position="1140"/>
    </location>
</feature>
<feature type="domain" description="Protein kinase" evidence="4">
    <location>
        <begin position="538"/>
        <end position="826"/>
    </location>
</feature>
<feature type="domain" description="Guanylate cyclase" evidence="3">
    <location>
        <begin position="897"/>
        <end position="1027"/>
    </location>
</feature>
<feature type="region of interest" description="Disordered" evidence="6">
    <location>
        <begin position="1083"/>
        <end position="1140"/>
    </location>
</feature>
<feature type="compositionally biased region" description="Polar residues" evidence="6">
    <location>
        <begin position="1084"/>
        <end position="1097"/>
    </location>
</feature>
<feature type="compositionally biased region" description="Low complexity" evidence="6">
    <location>
        <begin position="1109"/>
        <end position="1126"/>
    </location>
</feature>
<feature type="binding site" evidence="4">
    <location>
        <begin position="544"/>
        <end position="552"/>
    </location>
    <ligand>
        <name>ATP</name>
        <dbReference type="ChEBI" id="CHEBI:30616"/>
    </ligand>
</feature>
<feature type="binding site" evidence="4">
    <location>
        <position position="582"/>
    </location>
    <ligand>
        <name>ATP</name>
        <dbReference type="ChEBI" id="CHEBI:30616"/>
    </ligand>
</feature>
<feature type="glycosylation site" description="N-linked (GlcNAc...) asparagine" evidence="5">
    <location>
        <position position="220"/>
    </location>
</feature>
<feature type="glycosylation site" description="N-linked (GlcNAc...) asparagine" evidence="5">
    <location>
        <position position="301"/>
    </location>
</feature>
<feature type="glycosylation site" description="N-linked (GlcNAc...) asparagine" evidence="5">
    <location>
        <position position="349"/>
    </location>
</feature>
<feature type="glycosylation site" description="N-linked (GlcNAc...) asparagine" evidence="5">
    <location>
        <position position="385"/>
    </location>
</feature>
<feature type="glycosylation site" description="N-linked (GlcNAc...) asparagine" evidence="5">
    <location>
        <position position="418"/>
    </location>
</feature>
<feature type="glycosylation site" description="N-linked (GlcNAc...) asparagine" evidence="5">
    <location>
        <position position="441"/>
    </location>
</feature>
<feature type="glycosylation site" description="N-linked (GlcNAc...) asparagine" evidence="5">
    <location>
        <position position="459"/>
    </location>
</feature>
<proteinExistence type="evidence at transcript level"/>
<reference evidence="9" key="1">
    <citation type="journal article" date="1998" name="Science">
        <title>Genome sequence of the nematode C. elegans: a platform for investigating biology.</title>
        <authorList>
            <consortium name="The C. elegans sequencing consortium"/>
        </authorList>
    </citation>
    <scope>NUCLEOTIDE SEQUENCE [LARGE SCALE GENOMIC DNA]</scope>
    <source>
        <strain evidence="9">Bristol N2</strain>
    </source>
</reference>
<reference evidence="8" key="2">
    <citation type="journal article" date="2006" name="Genetics">
        <title>Searching for neuronal left/right asymmetry: genomewide analysis of nematode receptor-type guanylyl cyclases.</title>
        <authorList>
            <person name="Ortiz C.O."/>
            <person name="Etchberger J.F."/>
            <person name="Posy S.L."/>
            <person name="Frokjaer-Jensen C."/>
            <person name="Lockery S."/>
            <person name="Honig B."/>
            <person name="Hobert O."/>
        </authorList>
    </citation>
    <scope>TISSUE SPECIFICITY</scope>
</reference>
<gene>
    <name evidence="10" type="primary">gcy-3</name>
    <name evidence="10" type="ORF">R134.1</name>
</gene>
<keyword id="KW-0067">ATP-binding</keyword>
<keyword id="KW-1003">Cell membrane</keyword>
<keyword id="KW-0141">cGMP biosynthesis</keyword>
<keyword id="KW-0325">Glycoprotein</keyword>
<keyword id="KW-0342">GTP-binding</keyword>
<keyword id="KW-0456">Lyase</keyword>
<keyword id="KW-0472">Membrane</keyword>
<keyword id="KW-0547">Nucleotide-binding</keyword>
<keyword id="KW-0675">Receptor</keyword>
<keyword id="KW-1185">Reference proteome</keyword>
<keyword id="KW-0732">Signal</keyword>
<keyword id="KW-0812">Transmembrane</keyword>
<keyword id="KW-1133">Transmembrane helix</keyword>
<dbReference type="EC" id="4.6.1.2" evidence="1"/>
<dbReference type="EMBL" id="BX284602">
    <property type="protein sequence ID" value="CAA88052.1"/>
    <property type="molecule type" value="Genomic_DNA"/>
</dbReference>
<dbReference type="PIR" id="T24213">
    <property type="entry name" value="T24213"/>
</dbReference>
<dbReference type="RefSeq" id="NP_496037.1">
    <property type="nucleotide sequence ID" value="NM_063636.1"/>
</dbReference>
<dbReference type="SMR" id="Q10028"/>
<dbReference type="FunCoup" id="Q10028">
    <property type="interactions" value="177"/>
</dbReference>
<dbReference type="STRING" id="6239.R134.1.1"/>
<dbReference type="GlyCosmos" id="Q10028">
    <property type="glycosylation" value="7 sites, No reported glycans"/>
</dbReference>
<dbReference type="PaxDb" id="6239-R134.1"/>
<dbReference type="EnsemblMetazoa" id="R134.1a.1">
    <property type="protein sequence ID" value="R134.1a.1"/>
    <property type="gene ID" value="WBGene00001530"/>
</dbReference>
<dbReference type="GeneID" id="191641"/>
<dbReference type="KEGG" id="cel:CELE_R134.1"/>
<dbReference type="AGR" id="WB:WBGene00001530"/>
<dbReference type="CTD" id="191641"/>
<dbReference type="WormBase" id="R134.1a">
    <property type="protein sequence ID" value="CE01636"/>
    <property type="gene ID" value="WBGene00001530"/>
    <property type="gene designation" value="gcy-3"/>
</dbReference>
<dbReference type="eggNOG" id="KOG1023">
    <property type="taxonomic scope" value="Eukaryota"/>
</dbReference>
<dbReference type="GeneTree" id="ENSGT00970000196185"/>
<dbReference type="HOGENOM" id="CLU_001072_1_3_1"/>
<dbReference type="InParanoid" id="Q10028"/>
<dbReference type="OMA" id="CENYTVM"/>
<dbReference type="OrthoDB" id="4062651at2759"/>
<dbReference type="PhylomeDB" id="Q10028"/>
<dbReference type="Reactome" id="R-CEL-2514859">
    <property type="pathway name" value="Inactivation, recovery and regulation of the phototransduction cascade"/>
</dbReference>
<dbReference type="PRO" id="PR:Q10028"/>
<dbReference type="Proteomes" id="UP000001940">
    <property type="component" value="Chromosome II"/>
</dbReference>
<dbReference type="ExpressionAtlas" id="Q10028">
    <property type="expression patterns" value="baseline and differential"/>
</dbReference>
<dbReference type="GO" id="GO:0005886">
    <property type="term" value="C:plasma membrane"/>
    <property type="evidence" value="ECO:0000318"/>
    <property type="project" value="GO_Central"/>
</dbReference>
<dbReference type="GO" id="GO:0005524">
    <property type="term" value="F:ATP binding"/>
    <property type="evidence" value="ECO:0007669"/>
    <property type="project" value="UniProtKB-KW"/>
</dbReference>
<dbReference type="GO" id="GO:0005525">
    <property type="term" value="F:GTP binding"/>
    <property type="evidence" value="ECO:0007669"/>
    <property type="project" value="UniProtKB-KW"/>
</dbReference>
<dbReference type="GO" id="GO:0004383">
    <property type="term" value="F:guanylate cyclase activity"/>
    <property type="evidence" value="ECO:0000318"/>
    <property type="project" value="GO_Central"/>
</dbReference>
<dbReference type="GO" id="GO:0001653">
    <property type="term" value="F:peptide receptor activity"/>
    <property type="evidence" value="ECO:0000318"/>
    <property type="project" value="GO_Central"/>
</dbReference>
<dbReference type="GO" id="GO:0004672">
    <property type="term" value="F:protein kinase activity"/>
    <property type="evidence" value="ECO:0007669"/>
    <property type="project" value="InterPro"/>
</dbReference>
<dbReference type="GO" id="GO:0006182">
    <property type="term" value="P:cGMP biosynthetic process"/>
    <property type="evidence" value="ECO:0000318"/>
    <property type="project" value="GO_Central"/>
</dbReference>
<dbReference type="GO" id="GO:0035556">
    <property type="term" value="P:intracellular signal transduction"/>
    <property type="evidence" value="ECO:0007669"/>
    <property type="project" value="InterPro"/>
</dbReference>
<dbReference type="GO" id="GO:0007168">
    <property type="term" value="P:receptor guanylyl cyclase signaling pathway"/>
    <property type="evidence" value="ECO:0000318"/>
    <property type="project" value="GO_Central"/>
</dbReference>
<dbReference type="CDD" id="cd07302">
    <property type="entry name" value="CHD"/>
    <property type="match status" value="1"/>
</dbReference>
<dbReference type="CDD" id="cd06352">
    <property type="entry name" value="PBP1_NPR_GC-like"/>
    <property type="match status" value="1"/>
</dbReference>
<dbReference type="FunFam" id="3.30.70.1230:FF:000023">
    <property type="entry name" value="Guanylate cyclase"/>
    <property type="match status" value="1"/>
</dbReference>
<dbReference type="FunFam" id="1.10.510.10:FF:001114">
    <property type="entry name" value="Receptor-type guanylate cyclase gcy-4"/>
    <property type="match status" value="1"/>
</dbReference>
<dbReference type="FunFam" id="3.40.50.2300:FF:000563">
    <property type="entry name" value="Receptor-type guanylate cyclase gcy-4"/>
    <property type="match status" value="1"/>
</dbReference>
<dbReference type="Gene3D" id="3.40.50.2300">
    <property type="match status" value="2"/>
</dbReference>
<dbReference type="Gene3D" id="3.30.70.1230">
    <property type="entry name" value="Nucleotide cyclase"/>
    <property type="match status" value="1"/>
</dbReference>
<dbReference type="Gene3D" id="1.10.510.10">
    <property type="entry name" value="Transferase(Phosphotransferase) domain 1"/>
    <property type="match status" value="1"/>
</dbReference>
<dbReference type="InterPro" id="IPR001054">
    <property type="entry name" value="A/G_cyclase"/>
</dbReference>
<dbReference type="InterPro" id="IPR018297">
    <property type="entry name" value="A/G_cyclase_CS"/>
</dbReference>
<dbReference type="InterPro" id="IPR001828">
    <property type="entry name" value="ANF_lig-bd_rcpt"/>
</dbReference>
<dbReference type="InterPro" id="IPR050401">
    <property type="entry name" value="Cyclic_nucleotide_synthase"/>
</dbReference>
<dbReference type="InterPro" id="IPR011009">
    <property type="entry name" value="Kinase-like_dom_sf"/>
</dbReference>
<dbReference type="InterPro" id="IPR029787">
    <property type="entry name" value="Nucleotide_cyclase"/>
</dbReference>
<dbReference type="InterPro" id="IPR028082">
    <property type="entry name" value="Peripla_BP_I"/>
</dbReference>
<dbReference type="InterPro" id="IPR000719">
    <property type="entry name" value="Prot_kinase_dom"/>
</dbReference>
<dbReference type="InterPro" id="IPR001245">
    <property type="entry name" value="Ser-Thr/Tyr_kinase_cat_dom"/>
</dbReference>
<dbReference type="PANTHER" id="PTHR11920">
    <property type="entry name" value="GUANYLYL CYCLASE"/>
    <property type="match status" value="1"/>
</dbReference>
<dbReference type="PANTHER" id="PTHR11920:SF489">
    <property type="entry name" value="RECEPTOR-TYPE GUANYLATE CYCLASE GCY-3"/>
    <property type="match status" value="1"/>
</dbReference>
<dbReference type="Pfam" id="PF01094">
    <property type="entry name" value="ANF_receptor"/>
    <property type="match status" value="1"/>
</dbReference>
<dbReference type="Pfam" id="PF00211">
    <property type="entry name" value="Guanylate_cyc"/>
    <property type="match status" value="1"/>
</dbReference>
<dbReference type="Pfam" id="PF07714">
    <property type="entry name" value="PK_Tyr_Ser-Thr"/>
    <property type="match status" value="1"/>
</dbReference>
<dbReference type="SMART" id="SM00044">
    <property type="entry name" value="CYCc"/>
    <property type="match status" value="1"/>
</dbReference>
<dbReference type="SUPFAM" id="SSF55073">
    <property type="entry name" value="Nucleotide cyclase"/>
    <property type="match status" value="1"/>
</dbReference>
<dbReference type="SUPFAM" id="SSF53822">
    <property type="entry name" value="Periplasmic binding protein-like I"/>
    <property type="match status" value="1"/>
</dbReference>
<dbReference type="SUPFAM" id="SSF56112">
    <property type="entry name" value="Protein kinase-like (PK-like)"/>
    <property type="match status" value="1"/>
</dbReference>
<dbReference type="PROSITE" id="PS00452">
    <property type="entry name" value="GUANYLATE_CYCLASE_1"/>
    <property type="match status" value="1"/>
</dbReference>
<dbReference type="PROSITE" id="PS50125">
    <property type="entry name" value="GUANYLATE_CYCLASE_2"/>
    <property type="match status" value="1"/>
</dbReference>
<dbReference type="PROSITE" id="PS50011">
    <property type="entry name" value="PROTEIN_KINASE_DOM"/>
    <property type="match status" value="1"/>
</dbReference>
<evidence type="ECO:0000250" key="1">
    <source>
        <dbReference type="UniProtKB" id="Q19187"/>
    </source>
</evidence>
<evidence type="ECO:0000255" key="2"/>
<evidence type="ECO:0000255" key="3">
    <source>
        <dbReference type="PROSITE-ProRule" id="PRU00099"/>
    </source>
</evidence>
<evidence type="ECO:0000255" key="4">
    <source>
        <dbReference type="PROSITE-ProRule" id="PRU00159"/>
    </source>
</evidence>
<evidence type="ECO:0000255" key="5">
    <source>
        <dbReference type="PROSITE-ProRule" id="PRU00498"/>
    </source>
</evidence>
<evidence type="ECO:0000256" key="6">
    <source>
        <dbReference type="SAM" id="MobiDB-lite"/>
    </source>
</evidence>
<evidence type="ECO:0000269" key="7">
    <source>
    </source>
</evidence>
<evidence type="ECO:0000305" key="8"/>
<evidence type="ECO:0000312" key="9">
    <source>
        <dbReference type="Proteomes" id="UP000001940"/>
    </source>
</evidence>
<evidence type="ECO:0000312" key="10">
    <source>
        <dbReference type="WormBase" id="R134.1a"/>
    </source>
</evidence>
<name>GCY3_CAEEL</name>